<evidence type="ECO:0000250" key="1">
    <source>
        <dbReference type="UniProtKB" id="P03433"/>
    </source>
</evidence>
<evidence type="ECO:0000255" key="2">
    <source>
        <dbReference type="HAMAP-Rule" id="MF_04063"/>
    </source>
</evidence>
<feature type="chain" id="PRO_0000372994" description="Polymerase acidic protein">
    <location>
        <begin position="1"/>
        <end position="716"/>
    </location>
</feature>
<feature type="short sequence motif" description="Nuclear localization signal 1 (NLS1)" evidence="1 2">
    <location>
        <begin position="124"/>
        <end position="139"/>
    </location>
</feature>
<feature type="short sequence motif" description="Nuclear localization signal 2 (NLS2)" evidence="1 2">
    <location>
        <begin position="184"/>
        <end position="247"/>
    </location>
</feature>
<feature type="binding site" evidence="2">
    <location>
        <position position="41"/>
    </location>
    <ligand>
        <name>Mn(2+)</name>
        <dbReference type="ChEBI" id="CHEBI:29035"/>
        <label>1</label>
    </ligand>
</feature>
<feature type="binding site" evidence="2">
    <location>
        <position position="80"/>
    </location>
    <ligand>
        <name>Mn(2+)</name>
        <dbReference type="ChEBI" id="CHEBI:29035"/>
        <label>2</label>
    </ligand>
</feature>
<feature type="binding site" evidence="2">
    <location>
        <position position="108"/>
    </location>
    <ligand>
        <name>Mn(2+)</name>
        <dbReference type="ChEBI" id="CHEBI:29035"/>
        <label>1</label>
    </ligand>
</feature>
<feature type="binding site" evidence="2">
    <location>
        <position position="108"/>
    </location>
    <ligand>
        <name>Mn(2+)</name>
        <dbReference type="ChEBI" id="CHEBI:29035"/>
        <label>2</label>
    </ligand>
</feature>
<feature type="binding site" evidence="2">
    <location>
        <position position="119"/>
    </location>
    <ligand>
        <name>Mn(2+)</name>
        <dbReference type="ChEBI" id="CHEBI:29035"/>
        <label>1</label>
    </ligand>
</feature>
<feature type="binding site" evidence="2">
    <location>
        <position position="120"/>
    </location>
    <ligand>
        <name>Mn(2+)</name>
        <dbReference type="ChEBI" id="CHEBI:29035"/>
        <label>1</label>
    </ligand>
</feature>
<comment type="function">
    <text evidence="2">Plays an essential role in viral RNA transcription and replication by forming the heterotrimeric polymerase complex together with PB1 and PB2 subunits. The complex transcribes viral mRNAs by using a unique mechanism called cap-snatching. It consists in the hijacking and cleavage of host capped pre-mRNAs. These short capped RNAs are then used as primers for viral mRNAs. The PB2 subunit is responsible for the binding of the 5' cap of cellular pre-mRNAs which are subsequently cleaved after 10-13 nucleotides by the PA subunit that carries the endonuclease activity.</text>
</comment>
<comment type="cofactor">
    <cofactor evidence="2">
        <name>Mn(2+)</name>
        <dbReference type="ChEBI" id="CHEBI:29035"/>
    </cofactor>
    <text evidence="2">Binds 2 manganese ions per subunit.</text>
</comment>
<comment type="subunit">
    <text evidence="1 2">Influenza RNA polymerase is composed of three subunits: PB1, PB2 and PA. Interacts (via C-terminus) with PB1 (via N-terminus).</text>
</comment>
<comment type="subcellular location">
    <subcellularLocation>
        <location evidence="2">Host cytoplasm</location>
    </subcellularLocation>
    <subcellularLocation>
        <location evidence="2">Host nucleus</location>
    </subcellularLocation>
    <text evidence="1 2">PB1 and PA are transported in the host nucleus as a complex.</text>
</comment>
<comment type="alternative products">
    <event type="ribosomal frameshifting"/>
    <isoform>
        <id>B4URE3-1</id>
        <name>PA</name>
        <sequence type="displayed"/>
    </isoform>
    <isoform>
        <id>P0DJU2-1</id>
        <name>PA-X</name>
        <sequence type="external"/>
    </isoform>
</comment>
<comment type="PTM">
    <text evidence="1 2">Phosphorylated on serines and threonines by host kinases, including human casein kinase II.</text>
</comment>
<comment type="similarity">
    <text evidence="2">Belongs to the influenza viruses PA family.</text>
</comment>
<organism>
    <name type="scientific">Influenza A virus (strain A/Russia:St.Petersburg/8/2006 H1N1)</name>
    <dbReference type="NCBI Taxonomy" id="518998"/>
    <lineage>
        <taxon>Viruses</taxon>
        <taxon>Riboviria</taxon>
        <taxon>Orthornavirae</taxon>
        <taxon>Negarnaviricota</taxon>
        <taxon>Polyploviricotina</taxon>
        <taxon>Insthoviricetes</taxon>
        <taxon>Articulavirales</taxon>
        <taxon>Orthomyxoviridae</taxon>
        <taxon>Alphainfluenzavirus</taxon>
        <taxon>Alphainfluenzavirus influenzae</taxon>
        <taxon>Influenza A virus</taxon>
    </lineage>
</organism>
<name>PA_I06A0</name>
<accession>B4URE3</accession>
<gene>
    <name evidence="2" type="primary">PA</name>
</gene>
<organismHost>
    <name type="scientific">Aves</name>
    <dbReference type="NCBI Taxonomy" id="8782"/>
</organismHost>
<organismHost>
    <name type="scientific">Homo sapiens</name>
    <name type="common">Human</name>
    <dbReference type="NCBI Taxonomy" id="9606"/>
</organismHost>
<organismHost>
    <name type="scientific">Sus scrofa</name>
    <name type="common">Pig</name>
    <dbReference type="NCBI Taxonomy" id="9823"/>
</organismHost>
<reference key="1">
    <citation type="submission" date="2008-07" db="EMBL/GenBank/DDBJ databases">
        <title>The NIAID influenza genome sequencing project.</title>
        <authorList>
            <person name="Spiro D."/>
            <person name="Halpin R."/>
            <person name="Boyne A."/>
            <person name="Bera J."/>
            <person name="Ghedin E."/>
            <person name="Hostetler J."/>
            <person name="Fedorova N."/>
            <person name="Hine E."/>
            <person name="Overton L."/>
            <person name="Djuric K."/>
            <person name="Sarmiento M."/>
            <person name="Sitz J."/>
            <person name="Katzel D."/>
            <person name="Manojkumar R."/>
            <person name="Devis R."/>
            <person name="Fulvini A."/>
            <person name="Silverman J."/>
            <person name="Le J."/>
            <person name="Kilbourne E.D."/>
            <person name="Pokorny B."/>
            <person name="Bucher D."/>
            <person name="Orff E."/>
            <person name="Minieri J."/>
            <person name="Onodera S."/>
            <person name="Huang L."/>
            <person name="Bao Y."/>
            <person name="Sanders R."/>
            <person name="Dernovoy D."/>
            <person name="Kiryutin B."/>
            <person name="Lipman D.J."/>
            <person name="Tatusova T."/>
        </authorList>
    </citation>
    <scope>NUCLEOTIDE SEQUENCE [GENOMIC RNA]</scope>
</reference>
<reference key="2">
    <citation type="submission" date="2008-07" db="EMBL/GenBank/DDBJ databases">
        <authorList>
            <consortium name="The NIAID Influenza Genome Sequencing Consortium"/>
        </authorList>
    </citation>
    <scope>NUCLEOTIDE SEQUENCE [GENOMIC RNA]</scope>
</reference>
<dbReference type="EC" id="3.1.-.-" evidence="2"/>
<dbReference type="EMBL" id="CY034129">
    <property type="protein sequence ID" value="ACF54594.1"/>
    <property type="molecule type" value="Viral_cRNA"/>
</dbReference>
<dbReference type="SMR" id="B4URE3"/>
<dbReference type="Proteomes" id="UP000008081">
    <property type="component" value="Genome"/>
</dbReference>
<dbReference type="GO" id="GO:0030430">
    <property type="term" value="C:host cell cytoplasm"/>
    <property type="evidence" value="ECO:0007669"/>
    <property type="project" value="UniProtKB-SubCell"/>
</dbReference>
<dbReference type="GO" id="GO:0042025">
    <property type="term" value="C:host cell nucleus"/>
    <property type="evidence" value="ECO:0007669"/>
    <property type="project" value="UniProtKB-SubCell"/>
</dbReference>
<dbReference type="GO" id="GO:0004519">
    <property type="term" value="F:endonuclease activity"/>
    <property type="evidence" value="ECO:0007669"/>
    <property type="project" value="UniProtKB-KW"/>
</dbReference>
<dbReference type="GO" id="GO:0046872">
    <property type="term" value="F:metal ion binding"/>
    <property type="evidence" value="ECO:0007669"/>
    <property type="project" value="UniProtKB-KW"/>
</dbReference>
<dbReference type="GO" id="GO:0003723">
    <property type="term" value="F:RNA binding"/>
    <property type="evidence" value="ECO:0007669"/>
    <property type="project" value="UniProtKB-UniRule"/>
</dbReference>
<dbReference type="GO" id="GO:0075526">
    <property type="term" value="P:cap snatching"/>
    <property type="evidence" value="ECO:0007669"/>
    <property type="project" value="UniProtKB-UniRule"/>
</dbReference>
<dbReference type="GO" id="GO:0006351">
    <property type="term" value="P:DNA-templated transcription"/>
    <property type="evidence" value="ECO:0007669"/>
    <property type="project" value="UniProtKB-UniRule"/>
</dbReference>
<dbReference type="GO" id="GO:0039657">
    <property type="term" value="P:symbiont-mediated suppression of host gene expression"/>
    <property type="evidence" value="ECO:0007669"/>
    <property type="project" value="UniProtKB-KW"/>
</dbReference>
<dbReference type="GO" id="GO:0039523">
    <property type="term" value="P:symbiont-mediated suppression of host mRNA transcription via inhibition of RNA polymerase II activity"/>
    <property type="evidence" value="ECO:0007669"/>
    <property type="project" value="UniProtKB-UniRule"/>
</dbReference>
<dbReference type="GO" id="GO:0039694">
    <property type="term" value="P:viral RNA genome replication"/>
    <property type="evidence" value="ECO:0007669"/>
    <property type="project" value="InterPro"/>
</dbReference>
<dbReference type="GO" id="GO:0075523">
    <property type="term" value="P:viral translational frameshifting"/>
    <property type="evidence" value="ECO:0007669"/>
    <property type="project" value="UniProtKB-KW"/>
</dbReference>
<dbReference type="FunFam" id="3.40.91.90:FF:000001">
    <property type="entry name" value="Polymerase acidic protein"/>
    <property type="match status" value="1"/>
</dbReference>
<dbReference type="Gene3D" id="3.40.91.90">
    <property type="entry name" value="Influenza RNA-dependent RNA polymerase subunit PA, endonuclease domain"/>
    <property type="match status" value="1"/>
</dbReference>
<dbReference type="HAMAP" id="MF_04063">
    <property type="entry name" value="INFV_PA"/>
    <property type="match status" value="1"/>
</dbReference>
<dbReference type="InterPro" id="IPR037534">
    <property type="entry name" value="INFV_PA"/>
</dbReference>
<dbReference type="InterPro" id="IPR001009">
    <property type="entry name" value="PA/PA-X"/>
</dbReference>
<dbReference type="InterPro" id="IPR038372">
    <property type="entry name" value="PA/PA-X_sf"/>
</dbReference>
<dbReference type="Pfam" id="PF00603">
    <property type="entry name" value="Flu_PA"/>
    <property type="match status" value="1"/>
</dbReference>
<sequence length="716" mass="82587">MEDFVRQCFNPMIVELAEKTMKEYGEDLKIETNKFAAICTHLEVCFMYSDFHFINEQGESIIVELGDPNALLKHRFEIIEGRDRTMAWTVVNSICNTTGAEKPKFLPDLYDYKENRFIEIGVTRREVHIYYLEKANKIKSEKTHIHIFSFTGEEMATKADYTLDEESRARIKTRLFTIRQEMASRGLWDSFRQSERGEETIEERFEITGTMRKLADQSLPPNFSSLENFRAYVDGFEPNGYIEGKLSQMSKEVNARIEPFLKTTPRPLRLPNGPPCSQRSKFLLMDALKLSIEDPSHEGEGIPLYDAIKCMRTFFGWKEPNVVKPHEKGINPNYLLSWKQVLAELQDIENEEKIPKTKNMKKTSQLKWALGENMAPEKVDFDDCKDVGDLKQYDSDKPELRSLASWIQNEFNKACELTDSSWIELDEIGEDVAPIEHIASMRRNYFTSEVSHCRATEYIMKGVYINTALLNASCAAMDDFQLIPMISKCRTKEGRRKTNLYGFIIKGRSHLRNDTDVVNFVSMEFSLTDPRLEPHKWEKYCVLEIGDMLIRSAIGQVSRPMFLYVRTNGTSKIKMKWGMEMRRCLLQSLQQIESMIEAESSVKEKDMTKEFFENKSETWPIGESPKGVEESSIGKVCRTLLAKSVFNSLYASPQLEGFSAESRKLLLIVQALRDNLEPGTFDLGGLYEAIEECLINDPWVLLNASWFNSFLTHALS</sequence>
<keyword id="KW-1157">Cap snatching</keyword>
<keyword id="KW-0255">Endonuclease</keyword>
<keyword id="KW-1262">Eukaryotic host gene expression shutoff by virus</keyword>
<keyword id="KW-1191">Eukaryotic host transcription shutoff by virus</keyword>
<keyword id="KW-1035">Host cytoplasm</keyword>
<keyword id="KW-1190">Host gene expression shutoff by virus</keyword>
<keyword id="KW-1048">Host nucleus</keyword>
<keyword id="KW-0945">Host-virus interaction</keyword>
<keyword id="KW-0378">Hydrolase</keyword>
<keyword id="KW-1104">Inhibition of host RNA polymerase II by virus</keyword>
<keyword id="KW-0464">Manganese</keyword>
<keyword id="KW-0479">Metal-binding</keyword>
<keyword id="KW-0540">Nuclease</keyword>
<keyword id="KW-0597">Phosphoprotein</keyword>
<keyword id="KW-0688">Ribosomal frameshifting</keyword>
<protein>
    <recommendedName>
        <fullName evidence="2">Polymerase acidic protein</fullName>
        <ecNumber evidence="2">3.1.-.-</ecNumber>
    </recommendedName>
    <alternativeName>
        <fullName evidence="2">RNA-directed RNA polymerase subunit P2</fullName>
    </alternativeName>
</protein>
<proteinExistence type="inferred from homology"/>